<organism>
    <name type="scientific">Helicobacter acinonychis (strain Sheeba)</name>
    <dbReference type="NCBI Taxonomy" id="382638"/>
    <lineage>
        <taxon>Bacteria</taxon>
        <taxon>Pseudomonadati</taxon>
        <taxon>Campylobacterota</taxon>
        <taxon>Epsilonproteobacteria</taxon>
        <taxon>Campylobacterales</taxon>
        <taxon>Helicobacteraceae</taxon>
        <taxon>Helicobacter</taxon>
    </lineage>
</organism>
<evidence type="ECO:0000255" key="1">
    <source>
        <dbReference type="HAMAP-Rule" id="MF_00270"/>
    </source>
</evidence>
<evidence type="ECO:0000305" key="2"/>
<protein>
    <recommendedName>
        <fullName evidence="1">Small ribosomal subunit protein bS18</fullName>
    </recommendedName>
    <alternativeName>
        <fullName evidence="2">30S ribosomal protein S18</fullName>
    </alternativeName>
</protein>
<keyword id="KW-0687">Ribonucleoprotein</keyword>
<keyword id="KW-0689">Ribosomal protein</keyword>
<keyword id="KW-0694">RNA-binding</keyword>
<keyword id="KW-0699">rRNA-binding</keyword>
<feature type="chain" id="PRO_1000003508" description="Small ribosomal subunit protein bS18">
    <location>
        <begin position="1"/>
        <end position="85"/>
    </location>
</feature>
<accession>Q17Z29</accession>
<name>RS18_HELAH</name>
<gene>
    <name evidence="1" type="primary">rpsR</name>
    <name type="ordered locus">Hac_0249</name>
</gene>
<reference key="1">
    <citation type="journal article" date="2006" name="PLoS Genet.">
        <title>Who ate whom? Adaptive Helicobacter genomic changes that accompanied a host jump from early humans to large felines.</title>
        <authorList>
            <person name="Eppinger M."/>
            <person name="Baar C."/>
            <person name="Linz B."/>
            <person name="Raddatz G."/>
            <person name="Lanz C."/>
            <person name="Keller H."/>
            <person name="Morelli G."/>
            <person name="Gressmann H."/>
            <person name="Achtman M."/>
            <person name="Schuster S.C."/>
        </authorList>
    </citation>
    <scope>NUCLEOTIDE SEQUENCE [LARGE SCALE GENOMIC DNA]</scope>
    <source>
        <strain>Sheeba</strain>
    </source>
</reference>
<comment type="function">
    <text evidence="1">Binds as a heterodimer with protein bS6 to the central domain of the 16S rRNA, where it helps stabilize the platform of the 30S subunit.</text>
</comment>
<comment type="subunit">
    <text evidence="1">Part of the 30S ribosomal subunit. Forms a tight heterodimer with protein bS6.</text>
</comment>
<comment type="similarity">
    <text evidence="1">Belongs to the bacterial ribosomal protein bS18 family.</text>
</comment>
<proteinExistence type="inferred from homology"/>
<dbReference type="EMBL" id="AM260522">
    <property type="protein sequence ID" value="CAJ99097.1"/>
    <property type="molecule type" value="Genomic_DNA"/>
</dbReference>
<dbReference type="RefSeq" id="WP_011577212.1">
    <property type="nucleotide sequence ID" value="NC_008229.1"/>
</dbReference>
<dbReference type="SMR" id="Q17Z29"/>
<dbReference type="STRING" id="382638.Hac_0249"/>
<dbReference type="GeneID" id="31757764"/>
<dbReference type="KEGG" id="hac:Hac_0249"/>
<dbReference type="eggNOG" id="COG0238">
    <property type="taxonomic scope" value="Bacteria"/>
</dbReference>
<dbReference type="HOGENOM" id="CLU_148710_2_2_7"/>
<dbReference type="OrthoDB" id="9812008at2"/>
<dbReference type="BioCyc" id="HACI382638:HAC_RS01090-MONOMER"/>
<dbReference type="Proteomes" id="UP000000775">
    <property type="component" value="Chromosome"/>
</dbReference>
<dbReference type="GO" id="GO:0022627">
    <property type="term" value="C:cytosolic small ribosomal subunit"/>
    <property type="evidence" value="ECO:0007669"/>
    <property type="project" value="TreeGrafter"/>
</dbReference>
<dbReference type="GO" id="GO:0070181">
    <property type="term" value="F:small ribosomal subunit rRNA binding"/>
    <property type="evidence" value="ECO:0007669"/>
    <property type="project" value="TreeGrafter"/>
</dbReference>
<dbReference type="GO" id="GO:0003735">
    <property type="term" value="F:structural constituent of ribosome"/>
    <property type="evidence" value="ECO:0007669"/>
    <property type="project" value="InterPro"/>
</dbReference>
<dbReference type="GO" id="GO:0006412">
    <property type="term" value="P:translation"/>
    <property type="evidence" value="ECO:0007669"/>
    <property type="project" value="UniProtKB-UniRule"/>
</dbReference>
<dbReference type="FunFam" id="4.10.640.10:FF:000005">
    <property type="entry name" value="30S ribosomal protein S18"/>
    <property type="match status" value="1"/>
</dbReference>
<dbReference type="Gene3D" id="4.10.640.10">
    <property type="entry name" value="Ribosomal protein S18"/>
    <property type="match status" value="1"/>
</dbReference>
<dbReference type="HAMAP" id="MF_00270">
    <property type="entry name" value="Ribosomal_bS18"/>
    <property type="match status" value="1"/>
</dbReference>
<dbReference type="InterPro" id="IPR001648">
    <property type="entry name" value="Ribosomal_bS18"/>
</dbReference>
<dbReference type="InterPro" id="IPR018275">
    <property type="entry name" value="Ribosomal_bS18_CS"/>
</dbReference>
<dbReference type="InterPro" id="IPR036870">
    <property type="entry name" value="Ribosomal_bS18_sf"/>
</dbReference>
<dbReference type="NCBIfam" id="TIGR00165">
    <property type="entry name" value="S18"/>
    <property type="match status" value="1"/>
</dbReference>
<dbReference type="PANTHER" id="PTHR13479">
    <property type="entry name" value="30S RIBOSOMAL PROTEIN S18"/>
    <property type="match status" value="1"/>
</dbReference>
<dbReference type="PANTHER" id="PTHR13479:SF40">
    <property type="entry name" value="SMALL RIBOSOMAL SUBUNIT PROTEIN BS18M"/>
    <property type="match status" value="1"/>
</dbReference>
<dbReference type="Pfam" id="PF01084">
    <property type="entry name" value="Ribosomal_S18"/>
    <property type="match status" value="1"/>
</dbReference>
<dbReference type="PRINTS" id="PR00974">
    <property type="entry name" value="RIBOSOMALS18"/>
</dbReference>
<dbReference type="SUPFAM" id="SSF46911">
    <property type="entry name" value="Ribosomal protein S18"/>
    <property type="match status" value="1"/>
</dbReference>
<dbReference type="PROSITE" id="PS00057">
    <property type="entry name" value="RIBOSOMAL_S18"/>
    <property type="match status" value="1"/>
</dbReference>
<sequence>MEKKRYSKRYCRYTEAKISFIDYKDLDMLKHTLSERYKIMPRRLTGNSKKWQERVEVAIKRARHMALIPYIVDRKKVVDSPFKQH</sequence>